<keyword id="KW-1003">Cell membrane</keyword>
<keyword id="KW-0472">Membrane</keyword>
<keyword id="KW-1185">Reference proteome</keyword>
<keyword id="KW-0812">Transmembrane</keyword>
<keyword id="KW-1133">Transmembrane helix</keyword>
<feature type="chain" id="PRO_0000157888" description="Uncharacterized protein slr1298">
    <location>
        <begin position="1"/>
        <end position="755"/>
    </location>
</feature>
<feature type="transmembrane region" description="Helical" evidence="1">
    <location>
        <begin position="46"/>
        <end position="66"/>
    </location>
</feature>
<feature type="transmembrane region" description="Helical" evidence="1">
    <location>
        <begin position="70"/>
        <end position="90"/>
    </location>
</feature>
<feature type="transmembrane region" description="Helical" evidence="1">
    <location>
        <begin position="93"/>
        <end position="113"/>
    </location>
</feature>
<feature type="transmembrane region" description="Helical" evidence="1">
    <location>
        <begin position="118"/>
        <end position="138"/>
    </location>
</feature>
<feature type="transmembrane region" description="Helical" evidence="1">
    <location>
        <begin position="143"/>
        <end position="163"/>
    </location>
</feature>
<feature type="transmembrane region" description="Helical" evidence="1">
    <location>
        <begin position="411"/>
        <end position="431"/>
    </location>
</feature>
<feature type="transmembrane region" description="Helical" evidence="1">
    <location>
        <begin position="446"/>
        <end position="466"/>
    </location>
</feature>
<feature type="transmembrane region" description="Helical" evidence="1">
    <location>
        <begin position="482"/>
        <end position="502"/>
    </location>
</feature>
<feature type="transmembrane region" description="Helical" evidence="1">
    <location>
        <begin position="514"/>
        <end position="534"/>
    </location>
</feature>
<dbReference type="EMBL" id="BA000022">
    <property type="protein sequence ID" value="BAA16846.1"/>
    <property type="molecule type" value="Genomic_DNA"/>
</dbReference>
<dbReference type="PIR" id="S74695">
    <property type="entry name" value="S74695"/>
</dbReference>
<dbReference type="SMR" id="P72831"/>
<dbReference type="IntAct" id="P72831">
    <property type="interactions" value="1"/>
</dbReference>
<dbReference type="STRING" id="1148.gene:10497704"/>
<dbReference type="PaxDb" id="1148-1651920"/>
<dbReference type="EnsemblBacteria" id="BAA16846">
    <property type="protein sequence ID" value="BAA16846"/>
    <property type="gene ID" value="BAA16846"/>
</dbReference>
<dbReference type="KEGG" id="syn:slr1298"/>
<dbReference type="eggNOG" id="COG1289">
    <property type="taxonomic scope" value="Bacteria"/>
</dbReference>
<dbReference type="InParanoid" id="P72831"/>
<dbReference type="PhylomeDB" id="P72831"/>
<dbReference type="Proteomes" id="UP000001425">
    <property type="component" value="Chromosome"/>
</dbReference>
<dbReference type="GO" id="GO:0005886">
    <property type="term" value="C:plasma membrane"/>
    <property type="evidence" value="ECO:0007669"/>
    <property type="project" value="UniProtKB-SubCell"/>
</dbReference>
<dbReference type="InterPro" id="IPR052430">
    <property type="entry name" value="IVT-Associated"/>
</dbReference>
<dbReference type="InterPro" id="IPR049453">
    <property type="entry name" value="Memb_transporter_dom"/>
</dbReference>
<dbReference type="InterPro" id="IPR032692">
    <property type="entry name" value="YccS_N"/>
</dbReference>
<dbReference type="PANTHER" id="PTHR47804">
    <property type="entry name" value="60S RIBOSOMAL PROTEIN L19"/>
    <property type="match status" value="1"/>
</dbReference>
<dbReference type="PANTHER" id="PTHR47804:SF3">
    <property type="entry name" value="PROTEIN BRE4"/>
    <property type="match status" value="1"/>
</dbReference>
<dbReference type="Pfam" id="PF12805">
    <property type="entry name" value="FUSC-like"/>
    <property type="match status" value="1"/>
</dbReference>
<dbReference type="Pfam" id="PF13515">
    <property type="entry name" value="FUSC_2"/>
    <property type="match status" value="1"/>
</dbReference>
<protein>
    <recommendedName>
        <fullName>Uncharacterized protein slr1298</fullName>
    </recommendedName>
</protein>
<organism>
    <name type="scientific">Synechocystis sp. (strain ATCC 27184 / PCC 6803 / Kazusa)</name>
    <dbReference type="NCBI Taxonomy" id="1111708"/>
    <lineage>
        <taxon>Bacteria</taxon>
        <taxon>Bacillati</taxon>
        <taxon>Cyanobacteriota</taxon>
        <taxon>Cyanophyceae</taxon>
        <taxon>Synechococcales</taxon>
        <taxon>Merismopediaceae</taxon>
        <taxon>Synechocystis</taxon>
    </lineage>
</organism>
<reference key="1">
    <citation type="journal article" date="1996" name="DNA Res.">
        <title>Sequence analysis of the genome of the unicellular cyanobacterium Synechocystis sp. strain PCC6803. II. Sequence determination of the entire genome and assignment of potential protein-coding regions.</title>
        <authorList>
            <person name="Kaneko T."/>
            <person name="Sato S."/>
            <person name="Kotani H."/>
            <person name="Tanaka A."/>
            <person name="Asamizu E."/>
            <person name="Nakamura Y."/>
            <person name="Miyajima N."/>
            <person name="Hirosawa M."/>
            <person name="Sugiura M."/>
            <person name="Sasamoto S."/>
            <person name="Kimura T."/>
            <person name="Hosouchi T."/>
            <person name="Matsuno A."/>
            <person name="Muraki A."/>
            <person name="Nakazaki N."/>
            <person name="Naruo K."/>
            <person name="Okumura S."/>
            <person name="Shimpo S."/>
            <person name="Takeuchi C."/>
            <person name="Wada T."/>
            <person name="Watanabe A."/>
            <person name="Yamada M."/>
            <person name="Yasuda M."/>
            <person name="Tabata S."/>
        </authorList>
    </citation>
    <scope>NUCLEOTIDE SEQUENCE [LARGE SCALE GENOMIC DNA]</scope>
    <source>
        <strain>ATCC 27184 / PCC 6803 / Kazusa</strain>
    </source>
</reference>
<accession>P72831</accession>
<sequence length="755" mass="84276">MLAKLRQRLAFLTRTNGTIDWGRGIRTFCGMAVPYLGGMALGNPQLGLGVGLASQLILLADMGGLYSVRLKTIFGAWVGAAIAMAVGTIVPDGWGLGLAITGFVLFASGYLAVYGEQGAMVGIVTTFAFLLGAQNVSTDSFEFTSLAIGGMWSLILAIFIWPFRPNQPLRQMVANNYSILGNYLRAMAAANFSPDDPQAQQLVVKLRQNLLKSRQTLVASQRGLWGQSKLRELLLVLIEHTERLNKCLMLLNEIVNFHNLPQLQTVEILMEDAFNALGEVCLDLGQMVLGKRRIPNTNRLQLLVQALQQQKKLQRQALTEDFNDYNSLTTVTQLVNHLENLIKQLEQTIQTAELLQNPQLFSDNNSNDQGKLNKVRLMPWWDPLGSNFHLNSPLLRHGLRMALGGMVGATIAHLTQIPYGFWIVITLIFVLKPDFSLTFQRLSNRLLGTFLGVLVMSIALKLIQDPQLLSWLGILAIAMGMALLRFHYSVAVFFITAFALILKAIDPSVPTEYALLSRLVCTLIGSAIALGLAFSFLRQSENLRFTQASVRMLTNLEQYFQQLIPALLGKESINKKEAERVRNETRLAATAMQIALDRLLSDPSTPLEKQEPALTMTNYLARLSRGFRVLISHLENSSGSNPPPPIKLFTEQVQQSLENLRFSLEHQSSPAALPPMATTIKEIREYHQSYQAQRITEINQKQDFTPTRRYLDDFNLVVEECQQIYQRLETIHSAIARFTDSPQLANGIKLKSQPS</sequence>
<evidence type="ECO:0000255" key="1"/>
<evidence type="ECO:0000305" key="2"/>
<name>Y1298_SYNY3</name>
<proteinExistence type="inferred from homology"/>
<comment type="subcellular location">
    <subcellularLocation>
        <location evidence="2">Cell membrane</location>
        <topology evidence="2">Multi-pass membrane protein</topology>
    </subcellularLocation>
</comment>
<comment type="similarity">
    <text evidence="2">Belongs to the YccS/YhfK family.</text>
</comment>
<gene>
    <name type="ordered locus">slr1298</name>
</gene>